<keyword id="KW-0963">Cytoplasm</keyword>
<keyword id="KW-0342">GTP-binding</keyword>
<keyword id="KW-0436">Ligase</keyword>
<keyword id="KW-0460">Magnesium</keyword>
<keyword id="KW-0479">Metal-binding</keyword>
<keyword id="KW-0547">Nucleotide-binding</keyword>
<keyword id="KW-0658">Purine biosynthesis</keyword>
<sequence length="434" mass="47723">MESKNFKLPSPLATVIVGTQFGDEGKGKLVDYLSANYDIVVRYQGGANAGHTICFDGKSVVLHLVPSGIFHEGCTCVIGNGVVIDPVALLEEIKTVENLGYDVRGRLFISHNAHLIMPYHKLLDSLHESAQGDQKIGTTGRGIGPSYEDKVARKGIRVVDLLNPELLKEKLRENLSAKNKLLRNIYDREEIDVEAMVQEYEEFDKIIDPYVTNTQAYLTRELQAGKTVLLEGAQGCLLDVDHGTYPYVTSSNPTSGGACTGSGIAPNYIGKVIGITKAYMTRVGNGAFPTELLDETGELLGKIGHEFGATTGRKRRCGWLDLVALRYSLAINGVTEIALTKLDVLDSFEEIKVCTAYLLDGKELHDFPTDHQTLAQVTPVYTTLKGWMASNAAARTFEEMQLEAQRYVDFLEEQVQLPVTFISVGPGRDETVFR</sequence>
<dbReference type="EC" id="6.3.4.4" evidence="1"/>
<dbReference type="EMBL" id="CP000108">
    <property type="protein sequence ID" value="ABB29067.1"/>
    <property type="molecule type" value="Genomic_DNA"/>
</dbReference>
<dbReference type="SMR" id="Q3APK8"/>
<dbReference type="STRING" id="340177.Cag_1816"/>
<dbReference type="KEGG" id="cch:Cag_1816"/>
<dbReference type="eggNOG" id="COG0104">
    <property type="taxonomic scope" value="Bacteria"/>
</dbReference>
<dbReference type="HOGENOM" id="CLU_029848_0_0_10"/>
<dbReference type="OrthoDB" id="9807553at2"/>
<dbReference type="UniPathway" id="UPA00075">
    <property type="reaction ID" value="UER00335"/>
</dbReference>
<dbReference type="GO" id="GO:0005737">
    <property type="term" value="C:cytoplasm"/>
    <property type="evidence" value="ECO:0007669"/>
    <property type="project" value="UniProtKB-SubCell"/>
</dbReference>
<dbReference type="GO" id="GO:0004019">
    <property type="term" value="F:adenylosuccinate synthase activity"/>
    <property type="evidence" value="ECO:0007669"/>
    <property type="project" value="UniProtKB-UniRule"/>
</dbReference>
<dbReference type="GO" id="GO:0005525">
    <property type="term" value="F:GTP binding"/>
    <property type="evidence" value="ECO:0007669"/>
    <property type="project" value="UniProtKB-UniRule"/>
</dbReference>
<dbReference type="GO" id="GO:0000287">
    <property type="term" value="F:magnesium ion binding"/>
    <property type="evidence" value="ECO:0007669"/>
    <property type="project" value="UniProtKB-UniRule"/>
</dbReference>
<dbReference type="GO" id="GO:0044208">
    <property type="term" value="P:'de novo' AMP biosynthetic process"/>
    <property type="evidence" value="ECO:0007669"/>
    <property type="project" value="UniProtKB-UniRule"/>
</dbReference>
<dbReference type="GO" id="GO:0046040">
    <property type="term" value="P:IMP metabolic process"/>
    <property type="evidence" value="ECO:0007669"/>
    <property type="project" value="TreeGrafter"/>
</dbReference>
<dbReference type="CDD" id="cd03108">
    <property type="entry name" value="AdSS"/>
    <property type="match status" value="1"/>
</dbReference>
<dbReference type="FunFam" id="1.10.300.10:FF:000001">
    <property type="entry name" value="Adenylosuccinate synthetase"/>
    <property type="match status" value="1"/>
</dbReference>
<dbReference type="FunFam" id="3.90.170.10:FF:000001">
    <property type="entry name" value="Adenylosuccinate synthetase"/>
    <property type="match status" value="1"/>
</dbReference>
<dbReference type="Gene3D" id="3.40.440.10">
    <property type="entry name" value="Adenylosuccinate Synthetase, subunit A, domain 1"/>
    <property type="match status" value="1"/>
</dbReference>
<dbReference type="Gene3D" id="1.10.300.10">
    <property type="entry name" value="Adenylosuccinate Synthetase, subunit A, domain 2"/>
    <property type="match status" value="1"/>
</dbReference>
<dbReference type="Gene3D" id="3.90.170.10">
    <property type="entry name" value="Adenylosuccinate Synthetase, subunit A, domain 3"/>
    <property type="match status" value="1"/>
</dbReference>
<dbReference type="HAMAP" id="MF_00011">
    <property type="entry name" value="Adenylosucc_synth"/>
    <property type="match status" value="1"/>
</dbReference>
<dbReference type="InterPro" id="IPR018220">
    <property type="entry name" value="Adenylosuccin_syn_GTP-bd"/>
</dbReference>
<dbReference type="InterPro" id="IPR033128">
    <property type="entry name" value="Adenylosuccin_syn_Lys_AS"/>
</dbReference>
<dbReference type="InterPro" id="IPR042109">
    <property type="entry name" value="Adenylosuccinate_synth_dom1"/>
</dbReference>
<dbReference type="InterPro" id="IPR042110">
    <property type="entry name" value="Adenylosuccinate_synth_dom2"/>
</dbReference>
<dbReference type="InterPro" id="IPR042111">
    <property type="entry name" value="Adenylosuccinate_synth_dom3"/>
</dbReference>
<dbReference type="InterPro" id="IPR001114">
    <property type="entry name" value="Adenylosuccinate_synthetase"/>
</dbReference>
<dbReference type="InterPro" id="IPR027417">
    <property type="entry name" value="P-loop_NTPase"/>
</dbReference>
<dbReference type="NCBIfam" id="NF002223">
    <property type="entry name" value="PRK01117.1"/>
    <property type="match status" value="1"/>
</dbReference>
<dbReference type="NCBIfam" id="TIGR00184">
    <property type="entry name" value="purA"/>
    <property type="match status" value="1"/>
</dbReference>
<dbReference type="PANTHER" id="PTHR11846">
    <property type="entry name" value="ADENYLOSUCCINATE SYNTHETASE"/>
    <property type="match status" value="1"/>
</dbReference>
<dbReference type="PANTHER" id="PTHR11846:SF0">
    <property type="entry name" value="ADENYLOSUCCINATE SYNTHETASE"/>
    <property type="match status" value="1"/>
</dbReference>
<dbReference type="Pfam" id="PF00709">
    <property type="entry name" value="Adenylsucc_synt"/>
    <property type="match status" value="1"/>
</dbReference>
<dbReference type="SMART" id="SM00788">
    <property type="entry name" value="Adenylsucc_synt"/>
    <property type="match status" value="1"/>
</dbReference>
<dbReference type="SUPFAM" id="SSF52540">
    <property type="entry name" value="P-loop containing nucleoside triphosphate hydrolases"/>
    <property type="match status" value="1"/>
</dbReference>
<dbReference type="PROSITE" id="PS01266">
    <property type="entry name" value="ADENYLOSUCCIN_SYN_1"/>
    <property type="match status" value="1"/>
</dbReference>
<dbReference type="PROSITE" id="PS00513">
    <property type="entry name" value="ADENYLOSUCCIN_SYN_2"/>
    <property type="match status" value="1"/>
</dbReference>
<accession>Q3APK8</accession>
<evidence type="ECO:0000255" key="1">
    <source>
        <dbReference type="HAMAP-Rule" id="MF_00011"/>
    </source>
</evidence>
<feature type="chain" id="PRO_0000224267" description="Adenylosuccinate synthetase">
    <location>
        <begin position="1"/>
        <end position="434"/>
    </location>
</feature>
<feature type="active site" description="Proton acceptor" evidence="1">
    <location>
        <position position="23"/>
    </location>
</feature>
<feature type="active site" description="Proton donor" evidence="1">
    <location>
        <position position="51"/>
    </location>
</feature>
<feature type="binding site" evidence="1">
    <location>
        <begin position="22"/>
        <end position="28"/>
    </location>
    <ligand>
        <name>GTP</name>
        <dbReference type="ChEBI" id="CHEBI:37565"/>
    </ligand>
</feature>
<feature type="binding site" description="in other chain" evidence="1">
    <location>
        <begin position="23"/>
        <end position="26"/>
    </location>
    <ligand>
        <name>IMP</name>
        <dbReference type="ChEBI" id="CHEBI:58053"/>
        <note>ligand shared between dimeric partners</note>
    </ligand>
</feature>
<feature type="binding site" evidence="1">
    <location>
        <position position="23"/>
    </location>
    <ligand>
        <name>Mg(2+)</name>
        <dbReference type="ChEBI" id="CHEBI:18420"/>
    </ligand>
</feature>
<feature type="binding site" description="in other chain" evidence="1">
    <location>
        <begin position="48"/>
        <end position="51"/>
    </location>
    <ligand>
        <name>IMP</name>
        <dbReference type="ChEBI" id="CHEBI:58053"/>
        <note>ligand shared between dimeric partners</note>
    </ligand>
</feature>
<feature type="binding site" evidence="1">
    <location>
        <begin position="50"/>
        <end position="52"/>
    </location>
    <ligand>
        <name>GTP</name>
        <dbReference type="ChEBI" id="CHEBI:37565"/>
    </ligand>
</feature>
<feature type="binding site" evidence="1">
    <location>
        <position position="50"/>
    </location>
    <ligand>
        <name>Mg(2+)</name>
        <dbReference type="ChEBI" id="CHEBI:18420"/>
    </ligand>
</feature>
<feature type="binding site" description="in other chain" evidence="1">
    <location>
        <position position="139"/>
    </location>
    <ligand>
        <name>IMP</name>
        <dbReference type="ChEBI" id="CHEBI:58053"/>
        <note>ligand shared between dimeric partners</note>
    </ligand>
</feature>
<feature type="binding site" evidence="1">
    <location>
        <position position="153"/>
    </location>
    <ligand>
        <name>IMP</name>
        <dbReference type="ChEBI" id="CHEBI:58053"/>
        <note>ligand shared between dimeric partners</note>
    </ligand>
</feature>
<feature type="binding site" description="in other chain" evidence="1">
    <location>
        <position position="234"/>
    </location>
    <ligand>
        <name>IMP</name>
        <dbReference type="ChEBI" id="CHEBI:58053"/>
        <note>ligand shared between dimeric partners</note>
    </ligand>
</feature>
<feature type="binding site" description="in other chain" evidence="1">
    <location>
        <position position="249"/>
    </location>
    <ligand>
        <name>IMP</name>
        <dbReference type="ChEBI" id="CHEBI:58053"/>
        <note>ligand shared between dimeric partners</note>
    </ligand>
</feature>
<feature type="binding site" evidence="1">
    <location>
        <begin position="309"/>
        <end position="315"/>
    </location>
    <ligand>
        <name>substrate</name>
    </ligand>
</feature>
<feature type="binding site" description="in other chain" evidence="1">
    <location>
        <position position="313"/>
    </location>
    <ligand>
        <name>IMP</name>
        <dbReference type="ChEBI" id="CHEBI:58053"/>
        <note>ligand shared between dimeric partners</note>
    </ligand>
</feature>
<feature type="binding site" evidence="1">
    <location>
        <position position="315"/>
    </location>
    <ligand>
        <name>GTP</name>
        <dbReference type="ChEBI" id="CHEBI:37565"/>
    </ligand>
</feature>
<feature type="binding site" evidence="1">
    <location>
        <begin position="341"/>
        <end position="343"/>
    </location>
    <ligand>
        <name>GTP</name>
        <dbReference type="ChEBI" id="CHEBI:37565"/>
    </ligand>
</feature>
<feature type="binding site" evidence="1">
    <location>
        <begin position="423"/>
        <end position="425"/>
    </location>
    <ligand>
        <name>GTP</name>
        <dbReference type="ChEBI" id="CHEBI:37565"/>
    </ligand>
</feature>
<protein>
    <recommendedName>
        <fullName evidence="1">Adenylosuccinate synthetase</fullName>
        <shortName evidence="1">AMPSase</shortName>
        <shortName evidence="1">AdSS</shortName>
        <ecNumber evidence="1">6.3.4.4</ecNumber>
    </recommendedName>
    <alternativeName>
        <fullName evidence="1">IMP--aspartate ligase</fullName>
    </alternativeName>
</protein>
<comment type="function">
    <text evidence="1">Plays an important role in the de novo pathway of purine nucleotide biosynthesis. Catalyzes the first committed step in the biosynthesis of AMP from IMP.</text>
</comment>
<comment type="catalytic activity">
    <reaction evidence="1">
        <text>IMP + L-aspartate + GTP = N(6)-(1,2-dicarboxyethyl)-AMP + GDP + phosphate + 2 H(+)</text>
        <dbReference type="Rhea" id="RHEA:15753"/>
        <dbReference type="ChEBI" id="CHEBI:15378"/>
        <dbReference type="ChEBI" id="CHEBI:29991"/>
        <dbReference type="ChEBI" id="CHEBI:37565"/>
        <dbReference type="ChEBI" id="CHEBI:43474"/>
        <dbReference type="ChEBI" id="CHEBI:57567"/>
        <dbReference type="ChEBI" id="CHEBI:58053"/>
        <dbReference type="ChEBI" id="CHEBI:58189"/>
        <dbReference type="EC" id="6.3.4.4"/>
    </reaction>
</comment>
<comment type="cofactor">
    <cofactor evidence="1">
        <name>Mg(2+)</name>
        <dbReference type="ChEBI" id="CHEBI:18420"/>
    </cofactor>
    <text evidence="1">Binds 1 Mg(2+) ion per subunit.</text>
</comment>
<comment type="pathway">
    <text evidence="1">Purine metabolism; AMP biosynthesis via de novo pathway; AMP from IMP: step 1/2.</text>
</comment>
<comment type="subunit">
    <text evidence="1">Homodimer.</text>
</comment>
<comment type="subcellular location">
    <subcellularLocation>
        <location evidence="1">Cytoplasm</location>
    </subcellularLocation>
</comment>
<comment type="similarity">
    <text evidence="1">Belongs to the adenylosuccinate synthetase family.</text>
</comment>
<organism>
    <name type="scientific">Chlorobium chlorochromatii (strain CaD3)</name>
    <dbReference type="NCBI Taxonomy" id="340177"/>
    <lineage>
        <taxon>Bacteria</taxon>
        <taxon>Pseudomonadati</taxon>
        <taxon>Chlorobiota</taxon>
        <taxon>Chlorobiia</taxon>
        <taxon>Chlorobiales</taxon>
        <taxon>Chlorobiaceae</taxon>
        <taxon>Chlorobium/Pelodictyon group</taxon>
        <taxon>Chlorobium</taxon>
    </lineage>
</organism>
<name>PURA_CHLCH</name>
<gene>
    <name evidence="1" type="primary">purA</name>
    <name type="ordered locus">Cag_1816</name>
</gene>
<proteinExistence type="inferred from homology"/>
<reference key="1">
    <citation type="submission" date="2005-08" db="EMBL/GenBank/DDBJ databases">
        <title>Complete sequence of Chlorobium chlorochromatii CaD3.</title>
        <authorList>
            <consortium name="US DOE Joint Genome Institute"/>
            <person name="Copeland A."/>
            <person name="Lucas S."/>
            <person name="Lapidus A."/>
            <person name="Barry K."/>
            <person name="Detter J.C."/>
            <person name="Glavina T."/>
            <person name="Hammon N."/>
            <person name="Israni S."/>
            <person name="Pitluck S."/>
            <person name="Bryant D."/>
            <person name="Schmutz J."/>
            <person name="Larimer F."/>
            <person name="Land M."/>
            <person name="Kyrpides N."/>
            <person name="Ivanova N."/>
            <person name="Richardson P."/>
        </authorList>
    </citation>
    <scope>NUCLEOTIDE SEQUENCE [LARGE SCALE GENOMIC DNA]</scope>
    <source>
        <strain>CaD3</strain>
    </source>
</reference>